<gene>
    <name type="primary">RNF19A</name>
    <name type="synonym">RNF19</name>
</gene>
<name>RN19A_PIG</name>
<protein>
    <recommendedName>
        <fullName>E3 ubiquitin-protein ligase RNF19A</fullName>
        <ecNumber evidence="2">2.3.2.31</ecNumber>
    </recommendedName>
    <alternativeName>
        <fullName>Double ring-finger protein</fullName>
        <shortName>Dorfin</shortName>
    </alternativeName>
    <alternativeName>
        <fullName>RING finger protein 19A</fullName>
    </alternativeName>
</protein>
<comment type="function">
    <text evidence="1">E3 ubiquitin-protein ligase which accepts ubiquitin from E2 ubiquitin-conjugating enzymes UBE2L3 and UBE2L6 in the form of a thioester and then directly transfers the ubiquitin to targeted substrates, such as SNCAIP or CASR.</text>
</comment>
<comment type="catalytic activity">
    <reaction evidence="2">
        <text>[E2 ubiquitin-conjugating enzyme]-S-ubiquitinyl-L-cysteine + [acceptor protein]-L-lysine = [E2 ubiquitin-conjugating enzyme]-L-cysteine + [acceptor protein]-N(6)-ubiquitinyl-L-lysine.</text>
        <dbReference type="EC" id="2.3.2.31"/>
    </reaction>
</comment>
<comment type="pathway">
    <text>Protein modification; protein ubiquitination.</text>
</comment>
<comment type="subunit">
    <text evidence="1">Interacts with UBE2L3 and UBE2L6. Also interacts with transcription factor Sp1. Interacts with SNCAIP, CASR and VCP (By similarity).</text>
</comment>
<comment type="subcellular location">
    <subcellularLocation>
        <location evidence="7">Membrane</location>
        <topology evidence="7">Multi-pass membrane protein</topology>
    </subcellularLocation>
    <subcellularLocation>
        <location evidence="1">Cytoplasm</location>
        <location evidence="1">Cytoskeleton</location>
        <location evidence="1">Microtubule organizing center</location>
        <location evidence="1">Centrosome</location>
    </subcellularLocation>
</comment>
<comment type="domain">
    <text evidence="2">Members of the RBR family are atypical E3 ligases. They interact with the E2 conjugating enzyme UBE2L3 and function like HECT-type E3 enzymes: they bind E2s via the first RING domain, but require an obligate trans-thiolation step during the ubiquitin transfer, requiring a conserved cysteine residue in the second RING domain.</text>
</comment>
<comment type="similarity">
    <text evidence="7">Belongs to the RBR family. RNF19 subfamily.</text>
</comment>
<evidence type="ECO:0000250" key="1"/>
<evidence type="ECO:0000250" key="2">
    <source>
        <dbReference type="UniProtKB" id="O60260"/>
    </source>
</evidence>
<evidence type="ECO:0000250" key="3">
    <source>
        <dbReference type="UniProtKB" id="Q9NV58"/>
    </source>
</evidence>
<evidence type="ECO:0000255" key="4"/>
<evidence type="ECO:0000255" key="5">
    <source>
        <dbReference type="PROSITE-ProRule" id="PRU01221"/>
    </source>
</evidence>
<evidence type="ECO:0000256" key="6">
    <source>
        <dbReference type="SAM" id="MobiDB-lite"/>
    </source>
</evidence>
<evidence type="ECO:0000305" key="7"/>
<feature type="chain" id="PRO_0000307187" description="E3 ubiquitin-protein ligase RNF19A">
    <location>
        <begin position="1"/>
        <end position="838"/>
    </location>
</feature>
<feature type="transmembrane region" description="Helical" evidence="4">
    <location>
        <begin position="368"/>
        <end position="388"/>
    </location>
</feature>
<feature type="transmembrane region" description="Helical" evidence="4">
    <location>
        <begin position="424"/>
        <end position="444"/>
    </location>
</feature>
<feature type="zinc finger region" description="RING-type 1" evidence="5">
    <location>
        <begin position="132"/>
        <end position="179"/>
    </location>
</feature>
<feature type="zinc finger region" description="IBR-type" evidence="5">
    <location>
        <begin position="199"/>
        <end position="264"/>
    </location>
</feature>
<feature type="zinc finger region" description="RING-type 2; atypical" evidence="5">
    <location>
        <begin position="301"/>
        <end position="332"/>
    </location>
</feature>
<feature type="region of interest" description="TRIAD supradomain" evidence="5">
    <location>
        <begin position="128"/>
        <end position="351"/>
    </location>
</feature>
<feature type="region of interest" description="Disordered" evidence="6">
    <location>
        <begin position="622"/>
        <end position="685"/>
    </location>
</feature>
<feature type="region of interest" description="Interaction with CASR" evidence="1">
    <location>
        <begin position="660"/>
        <end position="838"/>
    </location>
</feature>
<feature type="region of interest" description="Disordered" evidence="6">
    <location>
        <begin position="700"/>
        <end position="721"/>
    </location>
</feature>
<feature type="compositionally biased region" description="Low complexity" evidence="6">
    <location>
        <begin position="631"/>
        <end position="644"/>
    </location>
</feature>
<feature type="compositionally biased region" description="Basic residues" evidence="6">
    <location>
        <begin position="671"/>
        <end position="683"/>
    </location>
</feature>
<feature type="compositionally biased region" description="Polar residues" evidence="6">
    <location>
        <begin position="700"/>
        <end position="717"/>
    </location>
</feature>
<feature type="active site" evidence="5">
    <location>
        <position position="316"/>
    </location>
</feature>
<feature type="binding site" evidence="5">
    <location>
        <position position="132"/>
    </location>
    <ligand>
        <name>Zn(2+)</name>
        <dbReference type="ChEBI" id="CHEBI:29105"/>
        <label>1</label>
    </ligand>
</feature>
<feature type="binding site" evidence="5">
    <location>
        <position position="135"/>
    </location>
    <ligand>
        <name>Zn(2+)</name>
        <dbReference type="ChEBI" id="CHEBI:29105"/>
        <label>1</label>
    </ligand>
</feature>
<feature type="binding site" evidence="5">
    <location>
        <position position="150"/>
    </location>
    <ligand>
        <name>Zn(2+)</name>
        <dbReference type="ChEBI" id="CHEBI:29105"/>
        <label>2</label>
    </ligand>
</feature>
<feature type="binding site" evidence="5">
    <location>
        <position position="152"/>
    </location>
    <ligand>
        <name>Zn(2+)</name>
        <dbReference type="ChEBI" id="CHEBI:29105"/>
        <label>2</label>
    </ligand>
</feature>
<feature type="binding site" evidence="5">
    <location>
        <position position="155"/>
    </location>
    <ligand>
        <name>Zn(2+)</name>
        <dbReference type="ChEBI" id="CHEBI:29105"/>
        <label>1</label>
    </ligand>
</feature>
<feature type="binding site" evidence="5">
    <location>
        <position position="158"/>
    </location>
    <ligand>
        <name>Zn(2+)</name>
        <dbReference type="ChEBI" id="CHEBI:29105"/>
        <label>1</label>
    </ligand>
</feature>
<feature type="binding site" evidence="5">
    <location>
        <position position="176"/>
    </location>
    <ligand>
        <name>Zn(2+)</name>
        <dbReference type="ChEBI" id="CHEBI:29105"/>
        <label>2</label>
    </ligand>
</feature>
<feature type="binding site" evidence="5">
    <location>
        <position position="179"/>
    </location>
    <ligand>
        <name>Zn(2+)</name>
        <dbReference type="ChEBI" id="CHEBI:29105"/>
        <label>2</label>
    </ligand>
</feature>
<feature type="binding site" evidence="5">
    <location>
        <position position="219"/>
    </location>
    <ligand>
        <name>Zn(2+)</name>
        <dbReference type="ChEBI" id="CHEBI:29105"/>
        <label>3</label>
    </ligand>
</feature>
<feature type="binding site" evidence="5">
    <location>
        <position position="224"/>
    </location>
    <ligand>
        <name>Zn(2+)</name>
        <dbReference type="ChEBI" id="CHEBI:29105"/>
        <label>3</label>
    </ligand>
</feature>
<feature type="binding site" evidence="5">
    <location>
        <position position="241"/>
    </location>
    <ligand>
        <name>Zn(2+)</name>
        <dbReference type="ChEBI" id="CHEBI:29105"/>
        <label>3</label>
    </ligand>
</feature>
<feature type="binding site" evidence="5">
    <location>
        <position position="246"/>
    </location>
    <ligand>
        <name>Zn(2+)</name>
        <dbReference type="ChEBI" id="CHEBI:29105"/>
        <label>3</label>
    </ligand>
</feature>
<feature type="binding site" evidence="5">
    <location>
        <position position="251"/>
    </location>
    <ligand>
        <name>Zn(2+)</name>
        <dbReference type="ChEBI" id="CHEBI:29105"/>
        <label>4</label>
    </ligand>
</feature>
<feature type="binding site" evidence="5">
    <location>
        <position position="254"/>
    </location>
    <ligand>
        <name>Zn(2+)</name>
        <dbReference type="ChEBI" id="CHEBI:29105"/>
        <label>4</label>
    </ligand>
</feature>
<feature type="binding site" evidence="5">
    <location>
        <position position="259"/>
    </location>
    <ligand>
        <name>Zn(2+)</name>
        <dbReference type="ChEBI" id="CHEBI:29105"/>
        <label>4</label>
    </ligand>
</feature>
<feature type="binding site" evidence="5">
    <location>
        <position position="264"/>
    </location>
    <ligand>
        <name>Zn(2+)</name>
        <dbReference type="ChEBI" id="CHEBI:29105"/>
        <label>4</label>
    </ligand>
</feature>
<feature type="binding site" evidence="5">
    <location>
        <position position="301"/>
    </location>
    <ligand>
        <name>Zn(2+)</name>
        <dbReference type="ChEBI" id="CHEBI:29105"/>
        <label>5</label>
    </ligand>
</feature>
<feature type="binding site" evidence="5">
    <location>
        <position position="304"/>
    </location>
    <ligand>
        <name>Zn(2+)</name>
        <dbReference type="ChEBI" id="CHEBI:29105"/>
        <label>5</label>
    </ligand>
</feature>
<feature type="binding site" evidence="5">
    <location>
        <position position="321"/>
    </location>
    <ligand>
        <name>Zn(2+)</name>
        <dbReference type="ChEBI" id="CHEBI:29105"/>
        <label>5</label>
    </ligand>
</feature>
<feature type="binding site" evidence="5">
    <location>
        <position position="324"/>
    </location>
    <ligand>
        <name>Zn(2+)</name>
        <dbReference type="ChEBI" id="CHEBI:29105"/>
        <label>5</label>
    </ligand>
</feature>
<feature type="binding site" evidence="5">
    <location>
        <position position="329"/>
    </location>
    <ligand>
        <name>Zn(2+)</name>
        <dbReference type="ChEBI" id="CHEBI:29105"/>
        <label>6</label>
    </ligand>
</feature>
<feature type="binding site" evidence="5">
    <location>
        <position position="332"/>
    </location>
    <ligand>
        <name>Zn(2+)</name>
        <dbReference type="ChEBI" id="CHEBI:29105"/>
        <label>6</label>
    </ligand>
</feature>
<feature type="binding site" evidence="5">
    <location>
        <position position="340"/>
    </location>
    <ligand>
        <name>Zn(2+)</name>
        <dbReference type="ChEBI" id="CHEBI:29105"/>
        <label>6</label>
    </ligand>
</feature>
<feature type="binding site" evidence="5">
    <location>
        <position position="347"/>
    </location>
    <ligand>
        <name>Zn(2+)</name>
        <dbReference type="ChEBI" id="CHEBI:29105"/>
        <label>6</label>
    </ligand>
</feature>
<feature type="modified residue" description="Phosphoserine" evidence="3">
    <location>
        <position position="631"/>
    </location>
</feature>
<proteinExistence type="evidence at transcript level"/>
<dbReference type="EC" id="2.3.2.31" evidence="2"/>
<dbReference type="EMBL" id="DQ091175">
    <property type="protein sequence ID" value="AAZ41326.1"/>
    <property type="molecule type" value="Genomic_DNA"/>
</dbReference>
<dbReference type="EMBL" id="DQ091176">
    <property type="protein sequence ID" value="AAZ41327.1"/>
    <property type="molecule type" value="mRNA"/>
</dbReference>
<dbReference type="RefSeq" id="NP_001033095.1">
    <property type="nucleotide sequence ID" value="NM_001038006.1"/>
</dbReference>
<dbReference type="RefSeq" id="XP_005663000.1">
    <property type="nucleotide sequence ID" value="XM_005662943.2"/>
</dbReference>
<dbReference type="RefSeq" id="XP_005663003.1">
    <property type="nucleotide sequence ID" value="XM_005662946.2"/>
</dbReference>
<dbReference type="RefSeq" id="XP_005663004.1">
    <property type="nucleotide sequence ID" value="XM_005662947.3"/>
</dbReference>
<dbReference type="RefSeq" id="XP_013852026.1">
    <property type="nucleotide sequence ID" value="XM_013996572.2"/>
</dbReference>
<dbReference type="RefSeq" id="XP_013852027.1">
    <property type="nucleotide sequence ID" value="XM_013996573.2"/>
</dbReference>
<dbReference type="RefSeq" id="XP_013852028.1">
    <property type="nucleotide sequence ID" value="XM_013996574.2"/>
</dbReference>
<dbReference type="FunCoup" id="Q2VJ60">
    <property type="interactions" value="1447"/>
</dbReference>
<dbReference type="STRING" id="9823.ENSSSCP00000033890"/>
<dbReference type="GlyGen" id="Q2VJ60">
    <property type="glycosylation" value="1 site"/>
</dbReference>
<dbReference type="PaxDb" id="9823-ENSSSCP00000006477"/>
<dbReference type="Ensembl" id="ENSSSCT00000042277.2">
    <property type="protein sequence ID" value="ENSSSCP00000033890.1"/>
    <property type="gene ID" value="ENSSSCG00000006066.4"/>
</dbReference>
<dbReference type="Ensembl" id="ENSSSCT00025100423.1">
    <property type="protein sequence ID" value="ENSSSCP00025044327.1"/>
    <property type="gene ID" value="ENSSSCG00025072973.1"/>
</dbReference>
<dbReference type="Ensembl" id="ENSSSCT00035021419.1">
    <property type="protein sequence ID" value="ENSSSCP00035007770.1"/>
    <property type="gene ID" value="ENSSSCG00035016720.1"/>
</dbReference>
<dbReference type="Ensembl" id="ENSSSCT00045053525.1">
    <property type="protein sequence ID" value="ENSSSCP00045037215.1"/>
    <property type="gene ID" value="ENSSSCG00045031404.1"/>
</dbReference>
<dbReference type="Ensembl" id="ENSSSCT00055003638.1">
    <property type="protein sequence ID" value="ENSSSCP00055002771.1"/>
    <property type="gene ID" value="ENSSSCG00055001953.1"/>
</dbReference>
<dbReference type="Ensembl" id="ENSSSCT00065023790.1">
    <property type="protein sequence ID" value="ENSSSCP00065009684.1"/>
    <property type="gene ID" value="ENSSSCG00065017907.1"/>
</dbReference>
<dbReference type="Ensembl" id="ENSSSCT00070023850.1">
    <property type="protein sequence ID" value="ENSSSCP00070019719.1"/>
    <property type="gene ID" value="ENSSSCG00070012176.1"/>
</dbReference>
<dbReference type="Ensembl" id="ENSSSCT00070023861.1">
    <property type="protein sequence ID" value="ENSSSCP00070019729.1"/>
    <property type="gene ID" value="ENSSSCG00070012176.1"/>
</dbReference>
<dbReference type="Ensembl" id="ENSSSCT00070023869.1">
    <property type="protein sequence ID" value="ENSSSCP00070019736.1"/>
    <property type="gene ID" value="ENSSSCG00070012176.1"/>
</dbReference>
<dbReference type="Ensembl" id="ENSSSCT00070023875.1">
    <property type="protein sequence ID" value="ENSSSCP00070019741.1"/>
    <property type="gene ID" value="ENSSSCG00070012176.1"/>
</dbReference>
<dbReference type="Ensembl" id="ENSSSCT00105033813">
    <property type="protein sequence ID" value="ENSSSCP00105023594"/>
    <property type="gene ID" value="ENSSSCG00105017600"/>
</dbReference>
<dbReference type="Ensembl" id="ENSSSCT00110013172">
    <property type="protein sequence ID" value="ENSSSCP00110009263"/>
    <property type="gene ID" value="ENSSSCG00110006724"/>
</dbReference>
<dbReference type="Ensembl" id="ENSSSCT00115008468">
    <property type="protein sequence ID" value="ENSSSCP00115007955"/>
    <property type="gene ID" value="ENSSSCG00115004920"/>
</dbReference>
<dbReference type="GeneID" id="654326"/>
<dbReference type="KEGG" id="ssc:654326"/>
<dbReference type="CTD" id="25897"/>
<dbReference type="VGNC" id="VGNC:92375">
    <property type="gene designation" value="RNF19A"/>
</dbReference>
<dbReference type="eggNOG" id="KOG1815">
    <property type="taxonomic scope" value="Eukaryota"/>
</dbReference>
<dbReference type="GeneTree" id="ENSGT00940000158703"/>
<dbReference type="HOGENOM" id="CLU_016793_1_0_1"/>
<dbReference type="InParanoid" id="Q2VJ60"/>
<dbReference type="OMA" id="HQCSISL"/>
<dbReference type="OrthoDB" id="1431934at2759"/>
<dbReference type="TreeFam" id="TF324777"/>
<dbReference type="Reactome" id="R-SSC-983168">
    <property type="pathway name" value="Antigen processing: Ubiquitination &amp; Proteasome degradation"/>
</dbReference>
<dbReference type="UniPathway" id="UPA00143"/>
<dbReference type="ChiTaRS" id="RNF19A">
    <property type="organism name" value="pig"/>
</dbReference>
<dbReference type="Proteomes" id="UP000008227">
    <property type="component" value="Chromosome 4"/>
</dbReference>
<dbReference type="Proteomes" id="UP000314985">
    <property type="component" value="Chromosome 4"/>
</dbReference>
<dbReference type="Proteomes" id="UP000694570">
    <property type="component" value="Unplaced"/>
</dbReference>
<dbReference type="Proteomes" id="UP000694571">
    <property type="component" value="Unplaced"/>
</dbReference>
<dbReference type="Proteomes" id="UP000694720">
    <property type="component" value="Unplaced"/>
</dbReference>
<dbReference type="Proteomes" id="UP000694722">
    <property type="component" value="Unplaced"/>
</dbReference>
<dbReference type="Proteomes" id="UP000694723">
    <property type="component" value="Unplaced"/>
</dbReference>
<dbReference type="Proteomes" id="UP000694724">
    <property type="component" value="Unplaced"/>
</dbReference>
<dbReference type="Proteomes" id="UP000694725">
    <property type="component" value="Unplaced"/>
</dbReference>
<dbReference type="Proteomes" id="UP000694726">
    <property type="component" value="Unplaced"/>
</dbReference>
<dbReference type="Proteomes" id="UP000694727">
    <property type="component" value="Unplaced"/>
</dbReference>
<dbReference type="Proteomes" id="UP000694728">
    <property type="component" value="Unplaced"/>
</dbReference>
<dbReference type="Bgee" id="ENSSSCG00000006066">
    <property type="expression patterns" value="Expressed in mesenteric lymph node and 43 other cell types or tissues"/>
</dbReference>
<dbReference type="ExpressionAtlas" id="Q2VJ60">
    <property type="expression patterns" value="baseline and differential"/>
</dbReference>
<dbReference type="GO" id="GO:0005813">
    <property type="term" value="C:centrosome"/>
    <property type="evidence" value="ECO:0007669"/>
    <property type="project" value="UniProtKB-SubCell"/>
</dbReference>
<dbReference type="GO" id="GO:0005737">
    <property type="term" value="C:cytoplasm"/>
    <property type="evidence" value="ECO:0000318"/>
    <property type="project" value="GO_Central"/>
</dbReference>
<dbReference type="GO" id="GO:0016020">
    <property type="term" value="C:membrane"/>
    <property type="evidence" value="ECO:0007669"/>
    <property type="project" value="UniProtKB-SubCell"/>
</dbReference>
<dbReference type="GO" id="GO:0000151">
    <property type="term" value="C:ubiquitin ligase complex"/>
    <property type="evidence" value="ECO:0000318"/>
    <property type="project" value="GO_Central"/>
</dbReference>
<dbReference type="GO" id="GO:0031624">
    <property type="term" value="F:ubiquitin conjugating enzyme binding"/>
    <property type="evidence" value="ECO:0000318"/>
    <property type="project" value="GO_Central"/>
</dbReference>
<dbReference type="GO" id="GO:0061630">
    <property type="term" value="F:ubiquitin protein ligase activity"/>
    <property type="evidence" value="ECO:0000318"/>
    <property type="project" value="GO_Central"/>
</dbReference>
<dbReference type="GO" id="GO:0008270">
    <property type="term" value="F:zinc ion binding"/>
    <property type="evidence" value="ECO:0007669"/>
    <property type="project" value="UniProtKB-KW"/>
</dbReference>
<dbReference type="GO" id="GO:0016567">
    <property type="term" value="P:protein ubiquitination"/>
    <property type="evidence" value="ECO:0007669"/>
    <property type="project" value="UniProtKB-UniPathway"/>
</dbReference>
<dbReference type="GO" id="GO:0006511">
    <property type="term" value="P:ubiquitin-dependent protein catabolic process"/>
    <property type="evidence" value="ECO:0000318"/>
    <property type="project" value="GO_Central"/>
</dbReference>
<dbReference type="CDD" id="cd20362">
    <property type="entry name" value="BRcat_RBR_RNF19A"/>
    <property type="match status" value="1"/>
</dbReference>
<dbReference type="CDD" id="cd20355">
    <property type="entry name" value="Rcat_RBR_RNF19"/>
    <property type="match status" value="1"/>
</dbReference>
<dbReference type="CDD" id="cd16775">
    <property type="entry name" value="RING-HC_RBR_RNF19A"/>
    <property type="match status" value="1"/>
</dbReference>
<dbReference type="FunFam" id="1.20.120.1750:FF:000001">
    <property type="entry name" value="RBR-type E3 ubiquitin transferase"/>
    <property type="match status" value="1"/>
</dbReference>
<dbReference type="FunFam" id="2.20.25.20:FF:000004">
    <property type="entry name" value="RBR-type E3 ubiquitin transferase"/>
    <property type="match status" value="1"/>
</dbReference>
<dbReference type="FunFam" id="3.30.40.10:FF:000052">
    <property type="entry name" value="RBR-type E3 ubiquitin transferase"/>
    <property type="match status" value="1"/>
</dbReference>
<dbReference type="Gene3D" id="1.20.120.1750">
    <property type="match status" value="1"/>
</dbReference>
<dbReference type="Gene3D" id="2.20.25.20">
    <property type="match status" value="1"/>
</dbReference>
<dbReference type="Gene3D" id="3.30.40.10">
    <property type="entry name" value="Zinc/RING finger domain, C3HC4 (zinc finger)"/>
    <property type="match status" value="1"/>
</dbReference>
<dbReference type="InterPro" id="IPR031127">
    <property type="entry name" value="E3_UB_ligase_RBR"/>
</dbReference>
<dbReference type="InterPro" id="IPR002867">
    <property type="entry name" value="IBR_dom"/>
</dbReference>
<dbReference type="InterPro" id="IPR044066">
    <property type="entry name" value="TRIAD_supradom"/>
</dbReference>
<dbReference type="InterPro" id="IPR001841">
    <property type="entry name" value="Znf_RING"/>
</dbReference>
<dbReference type="InterPro" id="IPR013083">
    <property type="entry name" value="Znf_RING/FYVE/PHD"/>
</dbReference>
<dbReference type="PANTHER" id="PTHR11685">
    <property type="entry name" value="RBR FAMILY RING FINGER AND IBR DOMAIN-CONTAINING"/>
    <property type="match status" value="1"/>
</dbReference>
<dbReference type="Pfam" id="PF01485">
    <property type="entry name" value="IBR"/>
    <property type="match status" value="2"/>
</dbReference>
<dbReference type="SMART" id="SM00647">
    <property type="entry name" value="IBR"/>
    <property type="match status" value="2"/>
</dbReference>
<dbReference type="SMART" id="SM00184">
    <property type="entry name" value="RING"/>
    <property type="match status" value="1"/>
</dbReference>
<dbReference type="SUPFAM" id="SSF57850">
    <property type="entry name" value="RING/U-box"/>
    <property type="match status" value="3"/>
</dbReference>
<dbReference type="PROSITE" id="PS51873">
    <property type="entry name" value="TRIAD"/>
    <property type="match status" value="1"/>
</dbReference>
<dbReference type="PROSITE" id="PS50089">
    <property type="entry name" value="ZF_RING_2"/>
    <property type="match status" value="1"/>
</dbReference>
<keyword id="KW-0963">Cytoplasm</keyword>
<keyword id="KW-0206">Cytoskeleton</keyword>
<keyword id="KW-0472">Membrane</keyword>
<keyword id="KW-0479">Metal-binding</keyword>
<keyword id="KW-0597">Phosphoprotein</keyword>
<keyword id="KW-1185">Reference proteome</keyword>
<keyword id="KW-0677">Repeat</keyword>
<keyword id="KW-0808">Transferase</keyword>
<keyword id="KW-0812">Transmembrane</keyword>
<keyword id="KW-1133">Transmembrane helix</keyword>
<keyword id="KW-0833">Ubl conjugation pathway</keyword>
<keyword id="KW-0862">Zinc</keyword>
<keyword id="KW-0863">Zinc-finger</keyword>
<accession>Q2VJ60</accession>
<accession>Q2VJ61</accession>
<organism>
    <name type="scientific">Sus scrofa</name>
    <name type="common">Pig</name>
    <dbReference type="NCBI Taxonomy" id="9823"/>
    <lineage>
        <taxon>Eukaryota</taxon>
        <taxon>Metazoa</taxon>
        <taxon>Chordata</taxon>
        <taxon>Craniata</taxon>
        <taxon>Vertebrata</taxon>
        <taxon>Euteleostomi</taxon>
        <taxon>Mammalia</taxon>
        <taxon>Eutheria</taxon>
        <taxon>Laurasiatheria</taxon>
        <taxon>Artiodactyla</taxon>
        <taxon>Suina</taxon>
        <taxon>Suidae</taxon>
        <taxon>Sus</taxon>
    </lineage>
</organism>
<sequence>MQEQEIGLLSKYNEGLCINTDPNSILMSILDMSLHRQMGSDRDLQSSASSVSLPSVKKAPKKRRISIGSLFRRKKENKRKSRELNGGVDGIASIESIHSEMCTDKNSIFSTNTSSDNGLTSISKQIGDFIECPLCLLRHSKDRFPEIMTCHHRSCVDCLRQYLRIEISESRVNISCPECTERFNPHDIRLILSDDVLMEKYEEFMLRRWLVADPDCRWCPAPDCGYAVIAFGCASCPKLTCGREGCGTEFCYHCKQIWHPNQTCDAARQERAQSLRLRTIRSSSISYSQESGAAADDIKPCPRCAAYIIKMNDGSCNHMTCAVCGCEFCWLCMKEISDLHYLSPSGCTFWGKKPWSRKKKILWQLGTLVGAPVGIALIAGIAIPAMIIGIPVYVGRKIHNRYEGKDVSKHKRNLAIAGGVTLSVIVSPVVAAVTVGIGVPIMLAYVYGVVPISLCRSGGCGVSAGNGKGVRIEFDDENDINVGGTNTAVDTTSVAEARHNPSIGEGSVGGLTGSLSASGSHMDRIGAIRDNLSETASTMALAGASITGSLSGSAMVNCFNRLEVQADVQKERYSLSGESGTVSLGTVSDNASTKAMAGSILNSYIPLDKEGNSMEVQVDIESKPSKFRHNSGSSSVDDGSAARSHPGGLSGGLPEGKSSATKWSKEATAGKKSKSGKLRKKSNMKINETREDMDAQLLEQQSTNSSEFEAPSLSDSMPSVADSHSSHFSEFSCSDLESMKTSCSHGSTDYHARFATVNILPEVENDRLENSPHQCSISVLTKTASCSEDPQLNHIAEEHSNNGIRPNVDLYFGNALKETNNNHSHQTMELKVAIQTDI</sequence>
<reference key="1">
    <citation type="submission" date="2005-06" db="EMBL/GenBank/DDBJ databases">
        <title>Identification of porcine dorfin sequences.</title>
        <authorList>
            <person name="Larsen K."/>
            <person name="Bendixen C."/>
        </authorList>
    </citation>
    <scope>NUCLEOTIDE SEQUENCE [GENOMIC DNA / MRNA]</scope>
</reference>